<proteinExistence type="evidence at transcript level"/>
<comment type="alternative products">
    <event type="alternative splicing"/>
    <isoform>
        <id>Q69ZB8-1</id>
        <name>1</name>
        <sequence type="displayed"/>
    </isoform>
    <isoform>
        <id>Q69ZB8-2</id>
        <name>2</name>
        <sequence type="described" ref="VSP_013721"/>
    </isoform>
</comment>
<gene>
    <name type="primary">Zcchc2</name>
    <name type="synonym">Kiaa1744</name>
</gene>
<dbReference type="EMBL" id="AK173248">
    <property type="protein sequence ID" value="BAD32526.1"/>
    <property type="molecule type" value="mRNA"/>
</dbReference>
<dbReference type="EMBL" id="AK037100">
    <property type="protein sequence ID" value="BAC29703.1"/>
    <property type="molecule type" value="mRNA"/>
</dbReference>
<dbReference type="EMBL" id="BC055760">
    <property type="protein sequence ID" value="AAH55760.1"/>
    <property type="molecule type" value="mRNA"/>
</dbReference>
<dbReference type="CCDS" id="CCDS48335.1">
    <molecule id="Q69ZB8-1"/>
</dbReference>
<dbReference type="CCDS" id="CCDS48336.1">
    <molecule id="Q69ZB8-2"/>
</dbReference>
<dbReference type="RefSeq" id="NP_001116147.1">
    <molecule id="Q69ZB8-2"/>
    <property type="nucleotide sequence ID" value="NM_001122675.1"/>
</dbReference>
<dbReference type="RefSeq" id="NP_001116148.1">
    <molecule id="Q69ZB8-1"/>
    <property type="nucleotide sequence ID" value="NM_001122676.1"/>
</dbReference>
<dbReference type="BioGRID" id="230628">
    <property type="interactions" value="1"/>
</dbReference>
<dbReference type="FunCoup" id="Q69ZB8">
    <property type="interactions" value="1002"/>
</dbReference>
<dbReference type="STRING" id="10090.ENSMUSP00000113974"/>
<dbReference type="GlyGen" id="Q69ZB8">
    <property type="glycosylation" value="1 site"/>
</dbReference>
<dbReference type="iPTMnet" id="Q69ZB8"/>
<dbReference type="PhosphoSitePlus" id="Q69ZB8"/>
<dbReference type="PaxDb" id="10090-ENSMUSP00000113974"/>
<dbReference type="ProteomicsDB" id="275272">
    <molecule id="Q69ZB8-1"/>
</dbReference>
<dbReference type="ProteomicsDB" id="275273">
    <molecule id="Q69ZB8-2"/>
</dbReference>
<dbReference type="Pumba" id="Q69ZB8"/>
<dbReference type="Antibodypedia" id="23063">
    <property type="antibodies" value="18 antibodies from 8 providers"/>
</dbReference>
<dbReference type="Ensembl" id="ENSMUST00000118196.8">
    <molecule id="Q69ZB8-1"/>
    <property type="protein sequence ID" value="ENSMUSP00000113974.2"/>
    <property type="gene ID" value="ENSMUSG00000038866.16"/>
</dbReference>
<dbReference type="Ensembl" id="ENSMUST00000119166.8">
    <molecule id="Q69ZB8-2"/>
    <property type="protein sequence ID" value="ENSMUSP00000113128.2"/>
    <property type="gene ID" value="ENSMUSG00000038866.16"/>
</dbReference>
<dbReference type="GeneID" id="227449"/>
<dbReference type="KEGG" id="mmu:227449"/>
<dbReference type="UCSC" id="uc007cgq.3">
    <molecule id="Q69ZB8-2"/>
    <property type="organism name" value="mouse"/>
</dbReference>
<dbReference type="UCSC" id="uc007cgt.3">
    <molecule id="Q69ZB8-1"/>
    <property type="organism name" value="mouse"/>
</dbReference>
<dbReference type="AGR" id="MGI:2444114"/>
<dbReference type="CTD" id="54877"/>
<dbReference type="MGI" id="MGI:2444114">
    <property type="gene designation" value="Zcchc2"/>
</dbReference>
<dbReference type="VEuPathDB" id="HostDB:ENSMUSG00000038866"/>
<dbReference type="eggNOG" id="KOG4400">
    <property type="taxonomic scope" value="Eukaryota"/>
</dbReference>
<dbReference type="GeneTree" id="ENSGT00520000055637"/>
<dbReference type="HOGENOM" id="CLU_012453_0_0_1"/>
<dbReference type="InParanoid" id="Q69ZB8"/>
<dbReference type="OMA" id="RIDKEYN"/>
<dbReference type="OrthoDB" id="6361509at2759"/>
<dbReference type="PhylomeDB" id="Q69ZB8"/>
<dbReference type="TreeFam" id="TF335574"/>
<dbReference type="BioGRID-ORCS" id="227449">
    <property type="hits" value="4 hits in 78 CRISPR screens"/>
</dbReference>
<dbReference type="ChiTaRS" id="Zcchc2">
    <property type="organism name" value="mouse"/>
</dbReference>
<dbReference type="PRO" id="PR:Q69ZB8"/>
<dbReference type="Proteomes" id="UP000000589">
    <property type="component" value="Chromosome 1"/>
</dbReference>
<dbReference type="RNAct" id="Q69ZB8">
    <property type="molecule type" value="protein"/>
</dbReference>
<dbReference type="Bgee" id="ENSMUSG00000038866">
    <property type="expression patterns" value="Expressed in secondary oocyte and 221 other cell types or tissues"/>
</dbReference>
<dbReference type="ExpressionAtlas" id="Q69ZB8">
    <property type="expression patterns" value="baseline and differential"/>
</dbReference>
<dbReference type="GO" id="GO:0005737">
    <property type="term" value="C:cytoplasm"/>
    <property type="evidence" value="ECO:0007669"/>
    <property type="project" value="Ensembl"/>
</dbReference>
<dbReference type="GO" id="GO:0003676">
    <property type="term" value="F:nucleic acid binding"/>
    <property type="evidence" value="ECO:0007669"/>
    <property type="project" value="InterPro"/>
</dbReference>
<dbReference type="GO" id="GO:0035091">
    <property type="term" value="F:phosphatidylinositol binding"/>
    <property type="evidence" value="ECO:0007669"/>
    <property type="project" value="InterPro"/>
</dbReference>
<dbReference type="GO" id="GO:0008270">
    <property type="term" value="F:zinc ion binding"/>
    <property type="evidence" value="ECO:0007669"/>
    <property type="project" value="UniProtKB-KW"/>
</dbReference>
<dbReference type="FunFam" id="3.30.1520.10:FF:000045">
    <property type="entry name" value="Zinc finger CCHC domain-containing protein 2"/>
    <property type="match status" value="1"/>
</dbReference>
<dbReference type="FunFam" id="4.10.60.10:FF:000019">
    <property type="entry name" value="Zinc finger CCHC domain-containing protein 2"/>
    <property type="match status" value="1"/>
</dbReference>
<dbReference type="Gene3D" id="3.30.1520.10">
    <property type="entry name" value="Phox-like domain"/>
    <property type="match status" value="1"/>
</dbReference>
<dbReference type="Gene3D" id="4.10.60.10">
    <property type="entry name" value="Zinc finger, CCHC-type"/>
    <property type="match status" value="1"/>
</dbReference>
<dbReference type="InterPro" id="IPR036871">
    <property type="entry name" value="PX_dom_sf"/>
</dbReference>
<dbReference type="InterPro" id="IPR042793">
    <property type="entry name" value="ZCCHC2"/>
</dbReference>
<dbReference type="InterPro" id="IPR001878">
    <property type="entry name" value="Znf_CCHC"/>
</dbReference>
<dbReference type="InterPro" id="IPR036875">
    <property type="entry name" value="Znf_CCHC_sf"/>
</dbReference>
<dbReference type="PANTHER" id="PTHR46939">
    <property type="entry name" value="ZINC FINGER CCHC DOMAIN-CONTAINING PROTEIN 2"/>
    <property type="match status" value="1"/>
</dbReference>
<dbReference type="PANTHER" id="PTHR46939:SF1">
    <property type="entry name" value="ZINC FINGER CCHC DOMAIN-CONTAINING PROTEIN 2"/>
    <property type="match status" value="1"/>
</dbReference>
<dbReference type="Pfam" id="PF25479">
    <property type="entry name" value="Vts1"/>
    <property type="match status" value="1"/>
</dbReference>
<dbReference type="Pfam" id="PF00098">
    <property type="entry name" value="zf-CCHC"/>
    <property type="match status" value="1"/>
</dbReference>
<dbReference type="SMART" id="SM00343">
    <property type="entry name" value="ZnF_C2HC"/>
    <property type="match status" value="1"/>
</dbReference>
<dbReference type="SUPFAM" id="SSF64268">
    <property type="entry name" value="PX domain"/>
    <property type="match status" value="1"/>
</dbReference>
<dbReference type="SUPFAM" id="SSF57756">
    <property type="entry name" value="Retrovirus zinc finger-like domains"/>
    <property type="match status" value="1"/>
</dbReference>
<dbReference type="PROSITE" id="PS50158">
    <property type="entry name" value="ZF_CCHC"/>
    <property type="match status" value="1"/>
</dbReference>
<sequence length="1166" mass="124517">MLRMKLPPKSTHPSEPPPDAEEPEADARPGAKAPLRRRRDCRPPPPPTGLPRGPPPPPSPPRGLEPPVASGPTAGAGMPGGGGHAAALREQERVYEWFGLVLGSAQRLEFMCGLLDLCNPLELRFLGSCLEDLARKDYHYLRDSEAKANGLSDPGSLADFREPAVRSRLIVYLALLGSENREAAGRLHRLLPQVDAVLRSLRATRAEGSRGSVEDEPSGDGEQDAEKDGPGPEGSGCAKLGTGGGLGFRAQEELLLLFTMASLHPAFSFHQRVTLREHLERLRSALRVEPEDAEVEPSNFAGSRAQNDSACGDYIQSNETGLVEQAQIPPDGLTVAPHRAQREAVHIEKIMLKGVQRKRADKYWEYTFKVNWSDLSVTTVTKTHQELQEFLLKLPKEFSSESFDKTILKALNQGSLRREERRHPDLEPILRQLFSTSPQAFLQSHKVRSFFRSISSESQHNFNNLQSSLKTSKILEHLKEDSSEASSQEEDVLQHTIIHKKHAGKSPALNVATSCSPLDGLTMQYAEQNGIVDWRNQGCAAIQHSEHCVSSADQHSAEKRSLSSGNKKKGKPQVEKEKVKKTEDRLNSRINGIRLSAPQHVHGSTVKDMNLDIGSGHDTCGETSSESYSSPSSPRHDGRESLESEEEKDRDSDSNSEDSVNPSSARFSGYGSVAQTIAVKPPAETVSLGTEDGNLLEAALTSHKYPHIPFMPTLHCVTHNGAQKSQVVIPSPKSADGKTLGMLVPNAVAISAVMESSNSAPVGILGPAASGESEKHLELLASPLPLPSTFLPHSSAPALQLTLQSLKLQPPQGSSDSCPVSIPPQPTGSLSIGSPNTAFIPVHNPGSFPGSPVATTDPITKSAPQVVGLNQMVPQIEGNTGTVPQPSNVKVVLPAAGLSAAQPPASFPFPGSPQAASALPTQNSSALNAATSAQPASTGISPSQSTVPPAVPTHTPGPAPSPSPALTHSTAQSDSTSYISAVGNTNANGTIVPPQQMGPCGSCGRRCSCGTNGNLQLNSYYYPNPMPGPMYRLPSFFTLPSICNGSYLNQAHQSNGNQLPFFLPQTPYANGLVHDPVMGSQASYGMQQMAGFGRLYPVYPAPNVVANTSGSGPKKNGNVSCYNCGVSGHYAQDCKQSSMEANQQGTYRLRYAPPLPPSNDTLDSAD</sequence>
<organism>
    <name type="scientific">Mus musculus</name>
    <name type="common">Mouse</name>
    <dbReference type="NCBI Taxonomy" id="10090"/>
    <lineage>
        <taxon>Eukaryota</taxon>
        <taxon>Metazoa</taxon>
        <taxon>Chordata</taxon>
        <taxon>Craniata</taxon>
        <taxon>Vertebrata</taxon>
        <taxon>Euteleostomi</taxon>
        <taxon>Mammalia</taxon>
        <taxon>Eutheria</taxon>
        <taxon>Euarchontoglires</taxon>
        <taxon>Glires</taxon>
        <taxon>Rodentia</taxon>
        <taxon>Myomorpha</taxon>
        <taxon>Muroidea</taxon>
        <taxon>Muridae</taxon>
        <taxon>Murinae</taxon>
        <taxon>Mus</taxon>
        <taxon>Mus</taxon>
    </lineage>
</organism>
<protein>
    <recommendedName>
        <fullName>Zinc finger CCHC domain-containing protein 2</fullName>
    </recommendedName>
</protein>
<feature type="chain" id="PRO_0000150950" description="Zinc finger CCHC domain-containing protein 2">
    <location>
        <begin position="1"/>
        <end position="1166"/>
    </location>
</feature>
<feature type="zinc finger region" description="CCHC-type" evidence="1">
    <location>
        <begin position="1119"/>
        <end position="1136"/>
    </location>
</feature>
<feature type="region of interest" description="Disordered" evidence="2">
    <location>
        <begin position="1"/>
        <end position="85"/>
    </location>
</feature>
<feature type="region of interest" description="Disordered" evidence="2">
    <location>
        <begin position="205"/>
        <end position="240"/>
    </location>
</feature>
<feature type="region of interest" description="Disordered" evidence="2">
    <location>
        <begin position="550"/>
        <end position="668"/>
    </location>
</feature>
<feature type="region of interest" description="Disordered" evidence="2">
    <location>
        <begin position="904"/>
        <end position="982"/>
    </location>
</feature>
<feature type="compositionally biased region" description="Pro residues" evidence="2">
    <location>
        <begin position="43"/>
        <end position="64"/>
    </location>
</feature>
<feature type="compositionally biased region" description="Low complexity" evidence="2">
    <location>
        <begin position="65"/>
        <end position="76"/>
    </location>
</feature>
<feature type="compositionally biased region" description="Acidic residues" evidence="2">
    <location>
        <begin position="214"/>
        <end position="223"/>
    </location>
</feature>
<feature type="compositionally biased region" description="Basic and acidic residues" evidence="2">
    <location>
        <begin position="572"/>
        <end position="587"/>
    </location>
</feature>
<feature type="compositionally biased region" description="Low complexity" evidence="2">
    <location>
        <begin position="624"/>
        <end position="633"/>
    </location>
</feature>
<feature type="compositionally biased region" description="Basic and acidic residues" evidence="2">
    <location>
        <begin position="634"/>
        <end position="653"/>
    </location>
</feature>
<feature type="compositionally biased region" description="Polar residues" evidence="2">
    <location>
        <begin position="919"/>
        <end position="947"/>
    </location>
</feature>
<feature type="compositionally biased region" description="Pro residues" evidence="2">
    <location>
        <begin position="949"/>
        <end position="963"/>
    </location>
</feature>
<feature type="compositionally biased region" description="Polar residues" evidence="2">
    <location>
        <begin position="964"/>
        <end position="982"/>
    </location>
</feature>
<feature type="splice variant" id="VSP_013721" description="In isoform 2." evidence="3 4">
    <original>TYRLRYAPPLPPSNDTLDSAD</original>
    <variation>NPTNSQRTCF</variation>
    <location>
        <begin position="1146"/>
        <end position="1166"/>
    </location>
</feature>
<evidence type="ECO:0000255" key="1">
    <source>
        <dbReference type="PROSITE-ProRule" id="PRU00047"/>
    </source>
</evidence>
<evidence type="ECO:0000256" key="2">
    <source>
        <dbReference type="SAM" id="MobiDB-lite"/>
    </source>
</evidence>
<evidence type="ECO:0000303" key="3">
    <source>
    </source>
</evidence>
<evidence type="ECO:0000303" key="4">
    <source>
    </source>
</evidence>
<accession>Q69ZB8</accession>
<accession>Q7TNF1</accession>
<accession>Q8CB08</accession>
<keyword id="KW-0025">Alternative splicing</keyword>
<keyword id="KW-0479">Metal-binding</keyword>
<keyword id="KW-1185">Reference proteome</keyword>
<keyword id="KW-0862">Zinc</keyword>
<keyword id="KW-0863">Zinc-finger</keyword>
<reference key="1">
    <citation type="journal article" date="2004" name="DNA Res.">
        <title>Prediction of the coding sequences of mouse homologues of KIAA gene: IV. The complete nucleotide sequences of 500 mouse KIAA-homologous cDNAs identified by screening of terminal sequences of cDNA clones randomly sampled from size-fractionated libraries.</title>
        <authorList>
            <person name="Okazaki N."/>
            <person name="Kikuno R."/>
            <person name="Ohara R."/>
            <person name="Inamoto S."/>
            <person name="Koseki H."/>
            <person name="Hiraoka S."/>
            <person name="Saga Y."/>
            <person name="Seino S."/>
            <person name="Nishimura M."/>
            <person name="Kaisho T."/>
            <person name="Hoshino K."/>
            <person name="Kitamura H."/>
            <person name="Nagase T."/>
            <person name="Ohara O."/>
            <person name="Koga H."/>
        </authorList>
    </citation>
    <scope>NUCLEOTIDE SEQUENCE [LARGE SCALE MRNA] (ISOFORM 2)</scope>
    <source>
        <tissue>Thymus</tissue>
    </source>
</reference>
<reference key="2">
    <citation type="journal article" date="2005" name="Science">
        <title>The transcriptional landscape of the mammalian genome.</title>
        <authorList>
            <person name="Carninci P."/>
            <person name="Kasukawa T."/>
            <person name="Katayama S."/>
            <person name="Gough J."/>
            <person name="Frith M.C."/>
            <person name="Maeda N."/>
            <person name="Oyama R."/>
            <person name="Ravasi T."/>
            <person name="Lenhard B."/>
            <person name="Wells C."/>
            <person name="Kodzius R."/>
            <person name="Shimokawa K."/>
            <person name="Bajic V.B."/>
            <person name="Brenner S.E."/>
            <person name="Batalov S."/>
            <person name="Forrest A.R."/>
            <person name="Zavolan M."/>
            <person name="Davis M.J."/>
            <person name="Wilming L.G."/>
            <person name="Aidinis V."/>
            <person name="Allen J.E."/>
            <person name="Ambesi-Impiombato A."/>
            <person name="Apweiler R."/>
            <person name="Aturaliya R.N."/>
            <person name="Bailey T.L."/>
            <person name="Bansal M."/>
            <person name="Baxter L."/>
            <person name="Beisel K.W."/>
            <person name="Bersano T."/>
            <person name="Bono H."/>
            <person name="Chalk A.M."/>
            <person name="Chiu K.P."/>
            <person name="Choudhary V."/>
            <person name="Christoffels A."/>
            <person name="Clutterbuck D.R."/>
            <person name="Crowe M.L."/>
            <person name="Dalla E."/>
            <person name="Dalrymple B.P."/>
            <person name="de Bono B."/>
            <person name="Della Gatta G."/>
            <person name="di Bernardo D."/>
            <person name="Down T."/>
            <person name="Engstrom P."/>
            <person name="Fagiolini M."/>
            <person name="Faulkner G."/>
            <person name="Fletcher C.F."/>
            <person name="Fukushima T."/>
            <person name="Furuno M."/>
            <person name="Futaki S."/>
            <person name="Gariboldi M."/>
            <person name="Georgii-Hemming P."/>
            <person name="Gingeras T.R."/>
            <person name="Gojobori T."/>
            <person name="Green R.E."/>
            <person name="Gustincich S."/>
            <person name="Harbers M."/>
            <person name="Hayashi Y."/>
            <person name="Hensch T.K."/>
            <person name="Hirokawa N."/>
            <person name="Hill D."/>
            <person name="Huminiecki L."/>
            <person name="Iacono M."/>
            <person name="Ikeo K."/>
            <person name="Iwama A."/>
            <person name="Ishikawa T."/>
            <person name="Jakt M."/>
            <person name="Kanapin A."/>
            <person name="Katoh M."/>
            <person name="Kawasawa Y."/>
            <person name="Kelso J."/>
            <person name="Kitamura H."/>
            <person name="Kitano H."/>
            <person name="Kollias G."/>
            <person name="Krishnan S.P."/>
            <person name="Kruger A."/>
            <person name="Kummerfeld S.K."/>
            <person name="Kurochkin I.V."/>
            <person name="Lareau L.F."/>
            <person name="Lazarevic D."/>
            <person name="Lipovich L."/>
            <person name="Liu J."/>
            <person name="Liuni S."/>
            <person name="McWilliam S."/>
            <person name="Madan Babu M."/>
            <person name="Madera M."/>
            <person name="Marchionni L."/>
            <person name="Matsuda H."/>
            <person name="Matsuzawa S."/>
            <person name="Miki H."/>
            <person name="Mignone F."/>
            <person name="Miyake S."/>
            <person name="Morris K."/>
            <person name="Mottagui-Tabar S."/>
            <person name="Mulder N."/>
            <person name="Nakano N."/>
            <person name="Nakauchi H."/>
            <person name="Ng P."/>
            <person name="Nilsson R."/>
            <person name="Nishiguchi S."/>
            <person name="Nishikawa S."/>
            <person name="Nori F."/>
            <person name="Ohara O."/>
            <person name="Okazaki Y."/>
            <person name="Orlando V."/>
            <person name="Pang K.C."/>
            <person name="Pavan W.J."/>
            <person name="Pavesi G."/>
            <person name="Pesole G."/>
            <person name="Petrovsky N."/>
            <person name="Piazza S."/>
            <person name="Reed J."/>
            <person name="Reid J.F."/>
            <person name="Ring B.Z."/>
            <person name="Ringwald M."/>
            <person name="Rost B."/>
            <person name="Ruan Y."/>
            <person name="Salzberg S.L."/>
            <person name="Sandelin A."/>
            <person name="Schneider C."/>
            <person name="Schoenbach C."/>
            <person name="Sekiguchi K."/>
            <person name="Semple C.A."/>
            <person name="Seno S."/>
            <person name="Sessa L."/>
            <person name="Sheng Y."/>
            <person name="Shibata Y."/>
            <person name="Shimada H."/>
            <person name="Shimada K."/>
            <person name="Silva D."/>
            <person name="Sinclair B."/>
            <person name="Sperling S."/>
            <person name="Stupka E."/>
            <person name="Sugiura K."/>
            <person name="Sultana R."/>
            <person name="Takenaka Y."/>
            <person name="Taki K."/>
            <person name="Tammoja K."/>
            <person name="Tan S.L."/>
            <person name="Tang S."/>
            <person name="Taylor M.S."/>
            <person name="Tegner J."/>
            <person name="Teichmann S.A."/>
            <person name="Ueda H.R."/>
            <person name="van Nimwegen E."/>
            <person name="Verardo R."/>
            <person name="Wei C.L."/>
            <person name="Yagi K."/>
            <person name="Yamanishi H."/>
            <person name="Zabarovsky E."/>
            <person name="Zhu S."/>
            <person name="Zimmer A."/>
            <person name="Hide W."/>
            <person name="Bult C."/>
            <person name="Grimmond S.M."/>
            <person name="Teasdale R.D."/>
            <person name="Liu E.T."/>
            <person name="Brusic V."/>
            <person name="Quackenbush J."/>
            <person name="Wahlestedt C."/>
            <person name="Mattick J.S."/>
            <person name="Hume D.A."/>
            <person name="Kai C."/>
            <person name="Sasaki D."/>
            <person name="Tomaru Y."/>
            <person name="Fukuda S."/>
            <person name="Kanamori-Katayama M."/>
            <person name="Suzuki M."/>
            <person name="Aoki J."/>
            <person name="Arakawa T."/>
            <person name="Iida J."/>
            <person name="Imamura K."/>
            <person name="Itoh M."/>
            <person name="Kato T."/>
            <person name="Kawaji H."/>
            <person name="Kawagashira N."/>
            <person name="Kawashima T."/>
            <person name="Kojima M."/>
            <person name="Kondo S."/>
            <person name="Konno H."/>
            <person name="Nakano K."/>
            <person name="Ninomiya N."/>
            <person name="Nishio T."/>
            <person name="Okada M."/>
            <person name="Plessy C."/>
            <person name="Shibata K."/>
            <person name="Shiraki T."/>
            <person name="Suzuki S."/>
            <person name="Tagami M."/>
            <person name="Waki K."/>
            <person name="Watahiki A."/>
            <person name="Okamura-Oho Y."/>
            <person name="Suzuki H."/>
            <person name="Kawai J."/>
            <person name="Hayashizaki Y."/>
        </authorList>
    </citation>
    <scope>NUCLEOTIDE SEQUENCE [LARGE SCALE MRNA] OF 482-1166 (ISOFORM 2)</scope>
    <source>
        <strain>C57BL/6J</strain>
        <tissue>Vagina</tissue>
    </source>
</reference>
<reference key="3">
    <citation type="journal article" date="2004" name="Genome Res.">
        <title>The status, quality, and expansion of the NIH full-length cDNA project: the Mammalian Gene Collection (MGC).</title>
        <authorList>
            <consortium name="The MGC Project Team"/>
        </authorList>
    </citation>
    <scope>NUCLEOTIDE SEQUENCE [LARGE SCALE MRNA] OF 867-1166 (ISOFORM 1)</scope>
    <source>
        <strain>C57BL/6J</strain>
        <tissue>Brain</tissue>
    </source>
</reference>
<name>ZCHC2_MOUSE</name>